<comment type="function">
    <text evidence="2">Receptor that plays a role in T-cell activation, proliferation, survival and the maintenance of immune homeostasis. Functions not only as an amplifier of TCR signals but delivers unique signals that control intracellular biochemical events that alter the gene expression program of T-cells. Stimulation upon engagement of its cognate ligands CD80 or CD86 increases proliferation and expression of various cytokines in particular IL2 production in both CD4(+) and CD8(+) T-cell subsets. Mechanistically, ligation induces recruitment of protein kinase C-theta/PRKCQ and GRB2 leading to NF-kappa-B activation via both PI3K/Akt-dependent and -independent pathways. In conjunction with TCR/CD3 ligation and CD40L costimulation, enhances the production of IL4 and IL10 in T-cells.</text>
</comment>
<comment type="subunit">
    <text evidence="2">Homodimer; disulfide-linked. Interacts with DUSP14. Binds to CD80/B7-1 and CD86/B7-2/B70. Interacts with GRB2. Interacts with PIK3R1. Interacts with PRKCQ.</text>
</comment>
<comment type="subcellular location">
    <subcellularLocation>
        <location evidence="2">Cell membrane</location>
        <topology evidence="2">Single-pass type I membrane protein</topology>
    </subcellularLocation>
</comment>
<comment type="PTM">
    <text evidence="2">Phosphorylated by LCK. Dephosphorylated by PTPN11.</text>
</comment>
<feature type="signal peptide" evidence="1">
    <location>
        <begin position="1"/>
        <end position="19"/>
    </location>
</feature>
<feature type="chain" id="PRO_0000014654" description="T-cell-specific surface glycoprotein CD28">
    <location>
        <begin position="20"/>
        <end position="218"/>
    </location>
</feature>
<feature type="topological domain" description="Extracellular" evidence="3">
    <location>
        <begin position="20"/>
        <end position="150"/>
    </location>
</feature>
<feature type="transmembrane region" description="Helical" evidence="3">
    <location>
        <begin position="151"/>
        <end position="177"/>
    </location>
</feature>
<feature type="topological domain" description="Cytoplasmic" evidence="3">
    <location>
        <begin position="178"/>
        <end position="218"/>
    </location>
</feature>
<feature type="domain" description="Ig-like V-type">
    <location>
        <begin position="29"/>
        <end position="138"/>
    </location>
</feature>
<feature type="modified residue" description="Phosphoserine" evidence="2">
    <location>
        <position position="187"/>
    </location>
</feature>
<feature type="modified residue" description="Phosphotyrosine" evidence="2">
    <location>
        <position position="189"/>
    </location>
</feature>
<feature type="modified residue" description="Phosphotyrosine" evidence="2">
    <location>
        <position position="207"/>
    </location>
</feature>
<feature type="glycosylation site" description="N-linked (GlcNAc...) asparagine" evidence="3">
    <location>
        <position position="72"/>
    </location>
</feature>
<feature type="glycosylation site" description="N-linked (GlcNAc...) asparagine" evidence="3">
    <location>
        <position position="93"/>
    </location>
</feature>
<feature type="glycosylation site" description="N-linked (GlcNAc...) asparagine" evidence="3">
    <location>
        <position position="106"/>
    </location>
</feature>
<feature type="glycosylation site" description="N-linked (GlcNAc...) asparagine" evidence="3">
    <location>
        <position position="130"/>
    </location>
</feature>
<feature type="disulfide bond" evidence="1">
    <location>
        <begin position="41"/>
        <end position="113"/>
    </location>
</feature>
<feature type="disulfide bond" evidence="1">
    <location>
        <begin position="67"/>
        <end position="87"/>
    </location>
</feature>
<reference key="1">
    <citation type="journal article" date="1992" name="Immunogenetics">
        <title>Identification of a cDNA encoding the rat CD28 homologue.</title>
        <authorList>
            <person name="Clark G.J."/>
            <person name="Dallman M.J."/>
        </authorList>
    </citation>
    <scope>NUCLEOTIDE SEQUENCE [MRNA]</scope>
    <source>
        <strain>DA</strain>
        <tissue>Lymphoid tissue</tissue>
    </source>
</reference>
<proteinExistence type="evidence at transcript level"/>
<accession>P31042</accession>
<sequence>MTLRLLFLALSFFSVQVTENKILVKQSPLLVVDNNEVSLSCRYSYNLLAKEFRASLYKGVNSDVEVCVGNGNFTYQPQFRPNVGFNCDGNFDNETVTFRLWNLDVNHTDIYFCKIEVMYPPPYLDNEKSNGTIIHIKEKHLCHAQTSPKLFWPLVVVAGVLLCYGLLVTVTLCIIWTNSRRNRLLQSDYMNMTPRRLGPTRKHYQPYAPARDFAAYRP</sequence>
<keyword id="KW-1003">Cell membrane</keyword>
<keyword id="KW-1015">Disulfide bond</keyword>
<keyword id="KW-0325">Glycoprotein</keyword>
<keyword id="KW-0393">Immunoglobulin domain</keyword>
<keyword id="KW-0472">Membrane</keyword>
<keyword id="KW-0597">Phosphoprotein</keyword>
<keyword id="KW-0675">Receptor</keyword>
<keyword id="KW-1185">Reference proteome</keyword>
<keyword id="KW-0732">Signal</keyword>
<keyword id="KW-0812">Transmembrane</keyword>
<keyword id="KW-1133">Transmembrane helix</keyword>
<organism>
    <name type="scientific">Rattus norvegicus</name>
    <name type="common">Rat</name>
    <dbReference type="NCBI Taxonomy" id="10116"/>
    <lineage>
        <taxon>Eukaryota</taxon>
        <taxon>Metazoa</taxon>
        <taxon>Chordata</taxon>
        <taxon>Craniata</taxon>
        <taxon>Vertebrata</taxon>
        <taxon>Euteleostomi</taxon>
        <taxon>Mammalia</taxon>
        <taxon>Eutheria</taxon>
        <taxon>Euarchontoglires</taxon>
        <taxon>Glires</taxon>
        <taxon>Rodentia</taxon>
        <taxon>Myomorpha</taxon>
        <taxon>Muroidea</taxon>
        <taxon>Muridae</taxon>
        <taxon>Murinae</taxon>
        <taxon>Rattus</taxon>
    </lineage>
</organism>
<name>CD28_RAT</name>
<protein>
    <recommendedName>
        <fullName>T-cell-specific surface glycoprotein CD28</fullName>
    </recommendedName>
    <cdAntigenName>CD28</cdAntigenName>
</protein>
<gene>
    <name type="primary">Cd28</name>
</gene>
<evidence type="ECO:0000250" key="1"/>
<evidence type="ECO:0000250" key="2">
    <source>
        <dbReference type="UniProtKB" id="P10747"/>
    </source>
</evidence>
<evidence type="ECO:0000255" key="3"/>
<dbReference type="EMBL" id="X55288">
    <property type="protein sequence ID" value="CAA39003.1"/>
    <property type="molecule type" value="mRNA"/>
</dbReference>
<dbReference type="PIR" id="S24413">
    <property type="entry name" value="S24413"/>
</dbReference>
<dbReference type="RefSeq" id="NP_037253.1">
    <property type="nucleotide sequence ID" value="NM_013121.1"/>
</dbReference>
<dbReference type="SMR" id="P31042"/>
<dbReference type="FunCoup" id="P31042">
    <property type="interactions" value="264"/>
</dbReference>
<dbReference type="STRING" id="10116.ENSRNOP00000013701"/>
<dbReference type="GlyCosmos" id="P31042">
    <property type="glycosylation" value="4 sites, No reported glycans"/>
</dbReference>
<dbReference type="GlyGen" id="P31042">
    <property type="glycosylation" value="4 sites"/>
</dbReference>
<dbReference type="PhosphoSitePlus" id="P31042"/>
<dbReference type="PaxDb" id="10116-ENSRNOP00000013701"/>
<dbReference type="GeneID" id="25660"/>
<dbReference type="KEGG" id="rno:25660"/>
<dbReference type="UCSC" id="RGD:2299">
    <property type="organism name" value="rat"/>
</dbReference>
<dbReference type="AGR" id="RGD:2299"/>
<dbReference type="CTD" id="940"/>
<dbReference type="RGD" id="2299">
    <property type="gene designation" value="Cd28"/>
</dbReference>
<dbReference type="eggNOG" id="ENOG502SAVP">
    <property type="taxonomic scope" value="Eukaryota"/>
</dbReference>
<dbReference type="InParanoid" id="P31042"/>
<dbReference type="PhylomeDB" id="P31042"/>
<dbReference type="Reactome" id="R-RNO-1257604">
    <property type="pathway name" value="PIP3 activates AKT signaling"/>
</dbReference>
<dbReference type="Reactome" id="R-RNO-389356">
    <property type="pathway name" value="Co-stimulation by CD28"/>
</dbReference>
<dbReference type="Reactome" id="R-RNO-389357">
    <property type="pathway name" value="CD28 dependent PI3K/Akt signaling"/>
</dbReference>
<dbReference type="Reactome" id="R-RNO-389359">
    <property type="pathway name" value="CD28 dependent Vav1 pathway"/>
</dbReference>
<dbReference type="Reactome" id="R-RNO-6811558">
    <property type="pathway name" value="PI5P, PP2A and IER3 Regulate PI3K/AKT Signaling"/>
</dbReference>
<dbReference type="PRO" id="PR:P31042"/>
<dbReference type="Proteomes" id="UP000002494">
    <property type="component" value="Unplaced"/>
</dbReference>
<dbReference type="GO" id="GO:0009986">
    <property type="term" value="C:cell surface"/>
    <property type="evidence" value="ECO:0000266"/>
    <property type="project" value="RGD"/>
</dbReference>
<dbReference type="GO" id="GO:0009897">
    <property type="term" value="C:external side of plasma membrane"/>
    <property type="evidence" value="ECO:0000266"/>
    <property type="project" value="RGD"/>
</dbReference>
<dbReference type="GO" id="GO:0001772">
    <property type="term" value="C:immunological synapse"/>
    <property type="evidence" value="ECO:0000266"/>
    <property type="project" value="RGD"/>
</dbReference>
<dbReference type="GO" id="GO:0005886">
    <property type="term" value="C:plasma membrane"/>
    <property type="evidence" value="ECO:0000266"/>
    <property type="project" value="RGD"/>
</dbReference>
<dbReference type="GO" id="GO:0098636">
    <property type="term" value="C:protein complex involved in cell adhesion"/>
    <property type="evidence" value="ECO:0000266"/>
    <property type="project" value="RGD"/>
</dbReference>
<dbReference type="GO" id="GO:0015026">
    <property type="term" value="F:coreceptor activity"/>
    <property type="evidence" value="ECO:0000303"/>
    <property type="project" value="RGD"/>
</dbReference>
<dbReference type="GO" id="GO:0042802">
    <property type="term" value="F:identical protein binding"/>
    <property type="evidence" value="ECO:0000353"/>
    <property type="project" value="RGD"/>
</dbReference>
<dbReference type="GO" id="GO:0019901">
    <property type="term" value="F:protein kinase binding"/>
    <property type="evidence" value="ECO:0000266"/>
    <property type="project" value="RGD"/>
</dbReference>
<dbReference type="GO" id="GO:0097190">
    <property type="term" value="P:apoptotic signaling pathway"/>
    <property type="evidence" value="ECO:0000266"/>
    <property type="project" value="RGD"/>
</dbReference>
<dbReference type="GO" id="GO:0035739">
    <property type="term" value="P:CD4-positive, alpha-beta T cell proliferation"/>
    <property type="evidence" value="ECO:0000266"/>
    <property type="project" value="RGD"/>
</dbReference>
<dbReference type="GO" id="GO:0006955">
    <property type="term" value="P:immune response"/>
    <property type="evidence" value="ECO:0000304"/>
    <property type="project" value="RGD"/>
</dbReference>
<dbReference type="GO" id="GO:0010629">
    <property type="term" value="P:negative regulation of gene expression"/>
    <property type="evidence" value="ECO:0000266"/>
    <property type="project" value="RGD"/>
</dbReference>
<dbReference type="GO" id="GO:0045060">
    <property type="term" value="P:negative thymic T cell selection"/>
    <property type="evidence" value="ECO:0000266"/>
    <property type="project" value="RGD"/>
</dbReference>
<dbReference type="GO" id="GO:0043491">
    <property type="term" value="P:phosphatidylinositol 3-kinase/protein kinase B signal transduction"/>
    <property type="evidence" value="ECO:0000266"/>
    <property type="project" value="RGD"/>
</dbReference>
<dbReference type="GO" id="GO:2000563">
    <property type="term" value="P:positive regulation of CD4-positive, alpha-beta T cell proliferation"/>
    <property type="evidence" value="ECO:0000266"/>
    <property type="project" value="RGD"/>
</dbReference>
<dbReference type="GO" id="GO:0010628">
    <property type="term" value="P:positive regulation of gene expression"/>
    <property type="evidence" value="ECO:0000266"/>
    <property type="project" value="RGD"/>
</dbReference>
<dbReference type="GO" id="GO:0002863">
    <property type="term" value="P:positive regulation of inflammatory response to antigenic stimulus"/>
    <property type="evidence" value="ECO:0000266"/>
    <property type="project" value="RGD"/>
</dbReference>
<dbReference type="GO" id="GO:0032733">
    <property type="term" value="P:positive regulation of interleukin-10 production"/>
    <property type="evidence" value="ECO:0000250"/>
    <property type="project" value="UniProtKB"/>
</dbReference>
<dbReference type="GO" id="GO:0032743">
    <property type="term" value="P:positive regulation of interleukin-2 production"/>
    <property type="evidence" value="ECO:0000250"/>
    <property type="project" value="UniProtKB"/>
</dbReference>
<dbReference type="GO" id="GO:0032753">
    <property type="term" value="P:positive regulation of interleukin-4 production"/>
    <property type="evidence" value="ECO:0000250"/>
    <property type="project" value="UniProtKB"/>
</dbReference>
<dbReference type="GO" id="GO:0048304">
    <property type="term" value="P:positive regulation of isotype switching to IgG isotypes"/>
    <property type="evidence" value="ECO:0000266"/>
    <property type="project" value="RGD"/>
</dbReference>
<dbReference type="GO" id="GO:0045840">
    <property type="term" value="P:positive regulation of mitotic nuclear division"/>
    <property type="evidence" value="ECO:0000250"/>
    <property type="project" value="UniProtKB"/>
</dbReference>
<dbReference type="GO" id="GO:0051897">
    <property type="term" value="P:positive regulation of phosphatidylinositol 3-kinase/protein kinase B signal transduction"/>
    <property type="evidence" value="ECO:0000266"/>
    <property type="project" value="RGD"/>
</dbReference>
<dbReference type="GO" id="GO:0042102">
    <property type="term" value="P:positive regulation of T cell proliferation"/>
    <property type="evidence" value="ECO:0000250"/>
    <property type="project" value="UniProtKB"/>
</dbReference>
<dbReference type="GO" id="GO:0045944">
    <property type="term" value="P:positive regulation of transcription by RNA polymerase II"/>
    <property type="evidence" value="ECO:0000266"/>
    <property type="project" value="RGD"/>
</dbReference>
<dbReference type="GO" id="GO:0045589">
    <property type="term" value="P:regulation of regulatory T cell differentiation"/>
    <property type="evidence" value="ECO:0000266"/>
    <property type="project" value="RGD"/>
</dbReference>
<dbReference type="GO" id="GO:0045066">
    <property type="term" value="P:regulatory T cell differentiation"/>
    <property type="evidence" value="ECO:0000266"/>
    <property type="project" value="RGD"/>
</dbReference>
<dbReference type="GO" id="GO:0042110">
    <property type="term" value="P:T cell activation"/>
    <property type="evidence" value="ECO:0000266"/>
    <property type="project" value="RGD"/>
</dbReference>
<dbReference type="GO" id="GO:0031295">
    <property type="term" value="P:T cell costimulation"/>
    <property type="evidence" value="ECO:0000315"/>
    <property type="project" value="RGD"/>
</dbReference>
<dbReference type="GO" id="GO:0042098">
    <property type="term" value="P:T cell proliferation"/>
    <property type="evidence" value="ECO:0000266"/>
    <property type="project" value="RGD"/>
</dbReference>
<dbReference type="GO" id="GO:0050852">
    <property type="term" value="P:T cell receptor signaling pathway"/>
    <property type="evidence" value="ECO:0000266"/>
    <property type="project" value="RGD"/>
</dbReference>
<dbReference type="GO" id="GO:0006366">
    <property type="term" value="P:transcription by RNA polymerase II"/>
    <property type="evidence" value="ECO:0000266"/>
    <property type="project" value="RGD"/>
</dbReference>
<dbReference type="FunFam" id="2.60.40.10:FF:000716">
    <property type="entry name" value="T-cell-specific surface glycoprotein CD28"/>
    <property type="match status" value="1"/>
</dbReference>
<dbReference type="Gene3D" id="2.60.40.10">
    <property type="entry name" value="Immunoglobulins"/>
    <property type="match status" value="1"/>
</dbReference>
<dbReference type="InterPro" id="IPR008093">
    <property type="entry name" value="CD28"/>
</dbReference>
<dbReference type="InterPro" id="IPR040216">
    <property type="entry name" value="CTLA4/CD28"/>
</dbReference>
<dbReference type="InterPro" id="IPR036179">
    <property type="entry name" value="Ig-like_dom_sf"/>
</dbReference>
<dbReference type="InterPro" id="IPR013783">
    <property type="entry name" value="Ig-like_fold"/>
</dbReference>
<dbReference type="InterPro" id="IPR013106">
    <property type="entry name" value="Ig_V-set"/>
</dbReference>
<dbReference type="PANTHER" id="PTHR11494">
    <property type="entry name" value="CYTOTOXIC T-LYMPHOCYTE PROTEIN"/>
    <property type="match status" value="1"/>
</dbReference>
<dbReference type="PANTHER" id="PTHR11494:SF7">
    <property type="entry name" value="T-CELL-SPECIFIC SURFACE GLYCOPROTEIN CD28"/>
    <property type="match status" value="1"/>
</dbReference>
<dbReference type="Pfam" id="PF15910">
    <property type="entry name" value="V-set_2"/>
    <property type="match status" value="1"/>
</dbReference>
<dbReference type="PRINTS" id="PR01717">
    <property type="entry name" value="CD28ANTIGEN"/>
</dbReference>
<dbReference type="SUPFAM" id="SSF48726">
    <property type="entry name" value="Immunoglobulin"/>
    <property type="match status" value="1"/>
</dbReference>